<comment type="function">
    <text evidence="1 2">Provides the tetrahydrofolates necessary for the synthesis of nucleotides and amino acids. Bacteriophage T5 induces high levels of dihydrofolate reductase in the host cell, probably for the viral replication.</text>
</comment>
<comment type="catalytic activity">
    <reaction evidence="4">
        <text>(6S)-5,6,7,8-tetrahydrofolate + NADP(+) = 7,8-dihydrofolate + NADPH + H(+)</text>
        <dbReference type="Rhea" id="RHEA:15009"/>
        <dbReference type="ChEBI" id="CHEBI:15378"/>
        <dbReference type="ChEBI" id="CHEBI:57451"/>
        <dbReference type="ChEBI" id="CHEBI:57453"/>
        <dbReference type="ChEBI" id="CHEBI:57783"/>
        <dbReference type="ChEBI" id="CHEBI:58349"/>
        <dbReference type="EC" id="1.5.1.3"/>
    </reaction>
</comment>
<comment type="induction">
    <text evidence="3">Expressed in the early phase of the viral replicative cycle.</text>
</comment>
<proteinExistence type="evidence at protein level"/>
<organism>
    <name type="scientific">Escherichia phage T5</name>
    <name type="common">Enterobacteria phage T5</name>
    <dbReference type="NCBI Taxonomy" id="2695836"/>
    <lineage>
        <taxon>Viruses</taxon>
        <taxon>Duplodnaviria</taxon>
        <taxon>Heunggongvirae</taxon>
        <taxon>Uroviricota</taxon>
        <taxon>Caudoviricetes</taxon>
        <taxon>Demerecviridae</taxon>
        <taxon>Markadamsvirinae</taxon>
        <taxon>Tequintavirus</taxon>
        <taxon>Tequintavirus T5</taxon>
    </lineage>
</organism>
<protein>
    <recommendedName>
        <fullName evidence="6">Dihydrofolate reductase</fullName>
        <ecNumber evidence="2">1.5.1.3</ecNumber>
    </recommendedName>
</protein>
<organismHost>
    <name type="scientific">Escherichia coli</name>
    <dbReference type="NCBI Taxonomy" id="562"/>
</organismHost>
<dbReference type="EC" id="1.5.1.3" evidence="2"/>
<dbReference type="EMBL" id="AY543070">
    <property type="protein sequence ID" value="AAS77139.1"/>
    <property type="molecule type" value="Genomic_DNA"/>
</dbReference>
<dbReference type="EMBL" id="AY692264">
    <property type="protein sequence ID" value="AAU05230.1"/>
    <property type="molecule type" value="Genomic_DNA"/>
</dbReference>
<dbReference type="EMBL" id="AY587007">
    <property type="protein sequence ID" value="AAX12025.1"/>
    <property type="molecule type" value="Genomic_DNA"/>
</dbReference>
<dbReference type="RefSeq" id="YP_006921.1">
    <property type="nucleotide sequence ID" value="NC_005859.1"/>
</dbReference>
<dbReference type="SMR" id="Q6QGJ4"/>
<dbReference type="GeneID" id="2777595"/>
<dbReference type="KEGG" id="vg:2777595"/>
<dbReference type="Proteomes" id="UP000002107">
    <property type="component" value="Genome"/>
</dbReference>
<dbReference type="Proteomes" id="UP000002141">
    <property type="component" value="Segment"/>
</dbReference>
<dbReference type="Proteomes" id="UP000002503">
    <property type="component" value="Segment"/>
</dbReference>
<dbReference type="GO" id="GO:0004146">
    <property type="term" value="F:dihydrofolate reductase activity"/>
    <property type="evidence" value="ECO:0000314"/>
    <property type="project" value="UniProtKB"/>
</dbReference>
<dbReference type="GO" id="GO:0006260">
    <property type="term" value="P:DNA replication"/>
    <property type="evidence" value="ECO:0007669"/>
    <property type="project" value="UniProtKB-KW"/>
</dbReference>
<dbReference type="GO" id="GO:0039693">
    <property type="term" value="P:viral DNA genome replication"/>
    <property type="evidence" value="ECO:0007669"/>
    <property type="project" value="UniProtKB-KW"/>
</dbReference>
<dbReference type="FunFam" id="3.40.430.10:FF:000014">
    <property type="entry name" value="Dihydrofolate reductase"/>
    <property type="match status" value="1"/>
</dbReference>
<dbReference type="Gene3D" id="3.40.430.10">
    <property type="entry name" value="Dihydrofolate Reductase, subunit A"/>
    <property type="match status" value="1"/>
</dbReference>
<dbReference type="InterPro" id="IPR024072">
    <property type="entry name" value="DHFR-like_dom_sf"/>
</dbReference>
<dbReference type="SUPFAM" id="SSF53597">
    <property type="entry name" value="Dihydrofolate reductase-like"/>
    <property type="match status" value="1"/>
</dbReference>
<gene>
    <name evidence="5" type="primary">frd</name>
    <name evidence="7" type="synonym">B3-frd</name>
    <name evidence="6" type="synonym">dhfR</name>
    <name evidence="5" type="ORF">T5.093</name>
    <name evidence="6" type="ORF">T5p091</name>
</gene>
<name>FRD_BPT5</name>
<keyword id="KW-0235">DNA replication</keyword>
<keyword id="KW-0521">NADP</keyword>
<keyword id="KW-0560">Oxidoreductase</keyword>
<keyword id="KW-1185">Reference proteome</keyword>
<keyword id="KW-1194">Viral DNA replication</keyword>
<feature type="chain" id="PRO_0000435561" description="Dihydrofolate reductase">
    <location>
        <begin position="1"/>
        <end position="177"/>
    </location>
</feature>
<evidence type="ECO:0000269" key="1">
    <source>
    </source>
</evidence>
<evidence type="ECO:0000269" key="2">
    <source>
    </source>
</evidence>
<evidence type="ECO:0000305" key="3">
    <source>
    </source>
</evidence>
<evidence type="ECO:0000305" key="4">
    <source>
    </source>
</evidence>
<evidence type="ECO:0000312" key="5">
    <source>
        <dbReference type="EMBL" id="AAS77139.1"/>
    </source>
</evidence>
<evidence type="ECO:0000312" key="6">
    <source>
        <dbReference type="EMBL" id="AAU05230.1"/>
    </source>
</evidence>
<evidence type="ECO:0000312" key="7">
    <source>
        <dbReference type="EMBL" id="AAX12025.1"/>
    </source>
</evidence>
<reference key="1">
    <citation type="submission" date="2004-01" db="EMBL/GenBank/DDBJ databases">
        <title>Bacteriophage T5 complete genome.</title>
        <authorList>
            <person name="Ksenzenko V.N."/>
            <person name="Kaliman A.V."/>
            <person name="Krutilina A.I."/>
            <person name="Shlyapnikov M.G."/>
        </authorList>
    </citation>
    <scope>NUCLEOTIDE SEQUENCE [LARGE SCALE GENOMIC DNA]</scope>
</reference>
<reference key="2">
    <citation type="journal article" date="2005" name="Virology">
        <title>Complete genome sequence of bacteriophage T5.</title>
        <authorList>
            <person name="Wang J."/>
            <person name="Jiang Y."/>
            <person name="Vincent M."/>
            <person name="Sun Y."/>
            <person name="Yu H."/>
            <person name="Wang J."/>
            <person name="Bao Q."/>
            <person name="Kong H."/>
            <person name="Hu S."/>
        </authorList>
    </citation>
    <scope>NUCLEOTIDE SEQUENCE [LARGE SCALE GENOMIC DNA]</scope>
    <scope>INDUCTION</scope>
    <source>
        <strain evidence="7">ATCC 11303-B5</strain>
    </source>
</reference>
<reference key="3">
    <citation type="journal article" date="2014" name="J. Virol.">
        <title>Insights into bacteriophage T5 structure from analysis of its morphogenesis genes and protein components.</title>
        <authorList>
            <person name="Zivanovic Y."/>
            <person name="Confalonieri F."/>
            <person name="Ponchon L."/>
            <person name="Lurz R."/>
            <person name="Chami M."/>
            <person name="Flayhan A."/>
            <person name="Renouard M."/>
            <person name="Huet A."/>
            <person name="Decottignies P."/>
            <person name="Davidson A.R."/>
            <person name="Breyton C."/>
            <person name="Boulanger P."/>
        </authorList>
    </citation>
    <scope>NUCLEOTIDE SEQUENCE [LARGE SCALE GENOMIC DNA]</scope>
    <source>
        <strain>St0 deletion mutant</strain>
    </source>
</reference>
<reference key="4">
    <citation type="journal article" date="1967" name="J. Biol. Chem.">
        <title>Evidence that bacteriophage-induced dihydrofolate reductase in a viral gene product.</title>
        <authorList>
            <person name="Mathews C.K."/>
        </authorList>
    </citation>
    <scope>FUNCTION</scope>
    <scope>CATALYTIC ACTIVITY</scope>
</reference>
<reference key="5">
    <citation type="journal article" date="1979" name="Mol. Gen. Genet.">
        <title>Localization of the dihydrofolate reductase gene on the physical map of bacteriophage T5.</title>
        <authorList>
            <person name="Peter G."/>
            <person name="Haenggi U.J."/>
            <person name="Zachau H.G."/>
        </authorList>
    </citation>
    <scope>FUNCTION</scope>
</reference>
<accession>Q6QGJ4</accession>
<sequence>MITAMYAVGPNGEFGLRGKLPWGSFKEELDAFYSQLDVLNPDNIIIGAGTYLALPYAVRERMIGASDLFIRADRPLPDDITHDIYTPISMIGDTLPTFLKDQQTVVLGGANLLLEMYQHGHIESAFVSTIFSEQKLEADTHLDSMILDYNYESTRLVYAVGANSDNSLRFVQELVTY</sequence>